<feature type="chain" id="PRO_0000106761" description="Uncharacterized protein MJ0259">
    <location>
        <begin position="1"/>
        <end position="202"/>
    </location>
</feature>
<protein>
    <recommendedName>
        <fullName>Uncharacterized protein MJ0259</fullName>
    </recommendedName>
</protein>
<proteinExistence type="predicted"/>
<sequence length="202" mass="22872">MKKLLLIIGIISLMTSMSMCLNNNNLNNLDLKKSILVEVNGTPIEIPLRATVGEAKEVKLINTTDREIYNYYHSKILIYIKGDMNISVKEGGVSIVDLVTKLEWFNQFYPHNIVVELNRTNSTVTVKSIFANGKTSITELKVNESEYLMHNNKTMVIEILKTHNTATITKINNTFIIEGNSLKELDNAETRFVIDMFKGSIT</sequence>
<gene>
    <name type="ordered locus">MJ0259</name>
</gene>
<name>Y259_METJA</name>
<organism>
    <name type="scientific">Methanocaldococcus jannaschii (strain ATCC 43067 / DSM 2661 / JAL-1 / JCM 10045 / NBRC 100440)</name>
    <name type="common">Methanococcus jannaschii</name>
    <dbReference type="NCBI Taxonomy" id="243232"/>
    <lineage>
        <taxon>Archaea</taxon>
        <taxon>Methanobacteriati</taxon>
        <taxon>Methanobacteriota</taxon>
        <taxon>Methanomada group</taxon>
        <taxon>Methanococci</taxon>
        <taxon>Methanococcales</taxon>
        <taxon>Methanocaldococcaceae</taxon>
        <taxon>Methanocaldococcus</taxon>
    </lineage>
</organism>
<accession>Q57707</accession>
<keyword id="KW-1185">Reference proteome</keyword>
<dbReference type="EMBL" id="L77117">
    <property type="protein sequence ID" value="AAB98250.1"/>
    <property type="molecule type" value="Genomic_DNA"/>
</dbReference>
<dbReference type="PIR" id="D64332">
    <property type="entry name" value="D64332"/>
</dbReference>
<dbReference type="RefSeq" id="WP_010869756.1">
    <property type="nucleotide sequence ID" value="NC_000909.1"/>
</dbReference>
<dbReference type="FunCoup" id="Q57707">
    <property type="interactions" value="8"/>
</dbReference>
<dbReference type="STRING" id="243232.MJ_0259"/>
<dbReference type="PaxDb" id="243232-MJ_0259"/>
<dbReference type="EnsemblBacteria" id="AAB98250">
    <property type="protein sequence ID" value="AAB98250"/>
    <property type="gene ID" value="MJ_0259"/>
</dbReference>
<dbReference type="GeneID" id="1451113"/>
<dbReference type="KEGG" id="mja:MJ_0259"/>
<dbReference type="eggNOG" id="arCOG05028">
    <property type="taxonomic scope" value="Archaea"/>
</dbReference>
<dbReference type="HOGENOM" id="CLU_1340754_0_0_2"/>
<dbReference type="InParanoid" id="Q57707"/>
<dbReference type="OrthoDB" id="65511at2157"/>
<dbReference type="Proteomes" id="UP000000805">
    <property type="component" value="Chromosome"/>
</dbReference>
<reference key="1">
    <citation type="journal article" date="1996" name="Science">
        <title>Complete genome sequence of the methanogenic archaeon, Methanococcus jannaschii.</title>
        <authorList>
            <person name="Bult C.J."/>
            <person name="White O."/>
            <person name="Olsen G.J."/>
            <person name="Zhou L."/>
            <person name="Fleischmann R.D."/>
            <person name="Sutton G.G."/>
            <person name="Blake J.A."/>
            <person name="FitzGerald L.M."/>
            <person name="Clayton R.A."/>
            <person name="Gocayne J.D."/>
            <person name="Kerlavage A.R."/>
            <person name="Dougherty B.A."/>
            <person name="Tomb J.-F."/>
            <person name="Adams M.D."/>
            <person name="Reich C.I."/>
            <person name="Overbeek R."/>
            <person name="Kirkness E.F."/>
            <person name="Weinstock K.G."/>
            <person name="Merrick J.M."/>
            <person name="Glodek A."/>
            <person name="Scott J.L."/>
            <person name="Geoghagen N.S.M."/>
            <person name="Weidman J.F."/>
            <person name="Fuhrmann J.L."/>
            <person name="Nguyen D."/>
            <person name="Utterback T.R."/>
            <person name="Kelley J.M."/>
            <person name="Peterson J.D."/>
            <person name="Sadow P.W."/>
            <person name="Hanna M.C."/>
            <person name="Cotton M.D."/>
            <person name="Roberts K.M."/>
            <person name="Hurst M.A."/>
            <person name="Kaine B.P."/>
            <person name="Borodovsky M."/>
            <person name="Klenk H.-P."/>
            <person name="Fraser C.M."/>
            <person name="Smith H.O."/>
            <person name="Woese C.R."/>
            <person name="Venter J.C."/>
        </authorList>
    </citation>
    <scope>NUCLEOTIDE SEQUENCE [LARGE SCALE GENOMIC DNA]</scope>
    <source>
        <strain>ATCC 43067 / DSM 2661 / JAL-1 / JCM 10045 / NBRC 100440</strain>
    </source>
</reference>